<sequence>MKFFYLIFSAIFFLADPALVKCSEDCENIFHDNAYLLKLDCEAGRVDPVEYDDISDEEIYEITVDVGVSSEDQEKVAKIIRECIAQVSTQDCTKFSEIYDCYMKKKICNYYPENM</sequence>
<comment type="function">
    <text evidence="2 3">Salivary protein that inhibits the classical pathway of complement system activation in the host while having no inhibitory effect on the alternative or lectin pathways (PubMed:26758086, PubMed:28278244). Prevent cleavage of host C4 and consequently impairs the activation of factors downstream of C4b in the complement cascade (PubMed:26758086).</text>
</comment>
<comment type="subunit">
    <text evidence="2 3">May form multimers.</text>
</comment>
<comment type="subcellular location">
    <subcellularLocation>
        <location evidence="7">Secreted</location>
    </subcellularLocation>
</comment>
<comment type="tissue specificity">
    <text evidence="1">Salivary gland (at protein level).</text>
</comment>
<comment type="miscellaneous">
    <text evidence="3">Recombinant protein produced in Pichia pastoris is monomeric in solution and does not inhibit the classical pathway of complement in vitro; however, antibodies against this protein inhibit the anti-complement activity of sand fly salivary gland homogenates.</text>
</comment>
<name>SALO_LUTLO</name>
<proteinExistence type="evidence at protein level"/>
<evidence type="ECO:0000269" key="1">
    <source>
    </source>
</evidence>
<evidence type="ECO:0000269" key="2">
    <source>
    </source>
</evidence>
<evidence type="ECO:0000269" key="3">
    <source>
    </source>
</evidence>
<evidence type="ECO:0000303" key="4">
    <source>
    </source>
</evidence>
<evidence type="ECO:0000303" key="5">
    <source>
    </source>
</evidence>
<evidence type="ECO:0000303" key="6">
    <source>
    </source>
</evidence>
<evidence type="ECO:0000305" key="7"/>
<evidence type="ECO:0000312" key="8">
    <source>
        <dbReference type="EMBL" id="AAR99725.1"/>
    </source>
</evidence>
<evidence type="ECO:0007744" key="9">
    <source>
        <dbReference type="PDB" id="5KX4"/>
    </source>
</evidence>
<evidence type="ECO:0007829" key="10">
    <source>
        <dbReference type="PDB" id="5KX4"/>
    </source>
</evidence>
<feature type="signal peptide" evidence="1">
    <location>
        <begin position="1"/>
        <end position="22"/>
    </location>
</feature>
<feature type="chain" id="PRO_0000460620" description="Salivary anti-complement protein" evidence="7">
    <location>
        <begin position="23"/>
        <end position="115"/>
    </location>
</feature>
<feature type="disulfide bond" evidence="3 9">
    <location>
        <begin position="26"/>
        <end position="108"/>
    </location>
</feature>
<feature type="disulfide bond" evidence="3 9">
    <location>
        <begin position="41"/>
        <end position="92"/>
    </location>
</feature>
<feature type="disulfide bond" evidence="3 9">
    <location>
        <begin position="83"/>
        <end position="101"/>
    </location>
</feature>
<feature type="helix" evidence="10">
    <location>
        <begin position="24"/>
        <end position="42"/>
    </location>
</feature>
<feature type="helix" evidence="10">
    <location>
        <begin position="48"/>
        <end position="51"/>
    </location>
</feature>
<feature type="helix" evidence="10">
    <location>
        <begin position="56"/>
        <end position="62"/>
    </location>
</feature>
<feature type="helix" evidence="10">
    <location>
        <begin position="64"/>
        <end position="66"/>
    </location>
</feature>
<feature type="turn" evidence="10">
    <location>
        <begin position="70"/>
        <end position="72"/>
    </location>
</feature>
<feature type="helix" evidence="10">
    <location>
        <begin position="73"/>
        <end position="86"/>
    </location>
</feature>
<feature type="helix" evidence="10">
    <location>
        <begin position="94"/>
        <end position="104"/>
    </location>
</feature>
<feature type="helix" evidence="10">
    <location>
        <begin position="107"/>
        <end position="110"/>
    </location>
</feature>
<protein>
    <recommendedName>
        <fullName evidence="7">Salivary anti-complement protein</fullName>
    </recommendedName>
    <alternativeName>
        <fullName evidence="8">10.7 kDa salivary protein</fullName>
        <shortName evidence="4 5">LJM19</shortName>
    </alternativeName>
    <alternativeName>
        <fullName evidence="5 6">Salivary anti-complement from Lu.longipalpis</fullName>
        <shortName evidence="5 6">SALO</shortName>
    </alternativeName>
</protein>
<keyword id="KW-0002">3D-structure</keyword>
<keyword id="KW-1216">Complement system impairing toxin</keyword>
<keyword id="KW-0903">Direct protein sequencing</keyword>
<keyword id="KW-1015">Disulfide bond</keyword>
<keyword id="KW-0964">Secreted</keyword>
<keyword id="KW-0732">Signal</keyword>
<keyword id="KW-0800">Toxin</keyword>
<reference evidence="8" key="1">
    <citation type="journal article" date="2004" name="J. Exp. Biol.">
        <title>Identification of the most abundant secreted proteins from the salivary glands of the sand fly Lutzomyia longipalpis, vector of Leishmania chagasi.</title>
        <authorList>
            <person name="Valenzuela J.G."/>
            <person name="Garfield M."/>
            <person name="Rowton E.D."/>
            <person name="Pham V.M."/>
        </authorList>
    </citation>
    <scope>NUCLEOTIDE SEQUENCE [LARGE SCALE MRNA]</scope>
    <scope>PROTEIN SEQUENCE OF 23-35</scope>
    <scope>TISSUE SPECIFICITY</scope>
    <source>
        <tissue evidence="8">Salivary gland</tissue>
    </source>
</reference>
<reference evidence="7" key="2">
    <citation type="journal article" date="2016" name="Sci. Rep.">
        <title>SALO, a novel classical pathway complement inhibitor from saliva of the sand fly Lutzomyia longipalpis.</title>
        <authorList>
            <person name="Ferreira V.P."/>
            <person name="Fazito Vale V."/>
            <person name="Pangburn M.K."/>
            <person name="Abdeladhim M."/>
            <person name="Mendes-Sousa A.F."/>
            <person name="Coutinho-Abreu I.V."/>
            <person name="Rasouli M."/>
            <person name="Brandt E.A."/>
            <person name="Meneses C."/>
            <person name="Lima K.F."/>
            <person name="Nascimento Araujo R."/>
            <person name="Pereira M.H."/>
            <person name="Kotsyfakis M."/>
            <person name="Oliveira F."/>
            <person name="Kamhawi S."/>
            <person name="Ribeiro J.M."/>
            <person name="Gontijo N.F."/>
            <person name="Collin N."/>
            <person name="Valenzuela J.G."/>
        </authorList>
    </citation>
    <scope>FUNCTION</scope>
    <scope>SUBUNIT</scope>
</reference>
<reference evidence="9" key="3">
    <citation type="journal article" date="2017" name="PLoS Negl. Trop. Dis.">
        <title>Structure of SALO, a leishmaniasis vaccine candidate from the sand fly Lutzomyia longipalpis.</title>
        <authorList>
            <person name="Asojo O.A."/>
            <person name="Kelleher A."/>
            <person name="Liu Z."/>
            <person name="Pollet J."/>
            <person name="Hudspeth E.M."/>
            <person name="Rezende W.C."/>
            <person name="Groen M.J."/>
            <person name="Seid C.A."/>
            <person name="Abdeladhim M."/>
            <person name="Townsend S."/>
            <person name="de Castro W."/>
            <person name="Mendes-Sousa A."/>
            <person name="Bartholomeu D.C."/>
            <person name="Fujiwara R.T."/>
            <person name="Bottazzi M.E."/>
            <person name="Hotez P.J."/>
            <person name="Zhan B."/>
            <person name="Oliveira F."/>
            <person name="Kamhawi S."/>
            <person name="Valenzuela J.G."/>
        </authorList>
    </citation>
    <scope>X-RAY CRYSTALLOGRAPHY (1.94 ANGSTROMS) OF 23-115</scope>
    <scope>FUNCTION</scope>
    <scope>SUBUNIT</scope>
    <scope>DISULFIDE BONDS</scope>
</reference>
<accession>Q5WPZ4</accession>
<organism evidence="8">
    <name type="scientific">Lutzomyia longipalpis</name>
    <name type="common">Sand fly</name>
    <dbReference type="NCBI Taxonomy" id="7200"/>
    <lineage>
        <taxon>Eukaryota</taxon>
        <taxon>Metazoa</taxon>
        <taxon>Ecdysozoa</taxon>
        <taxon>Arthropoda</taxon>
        <taxon>Hexapoda</taxon>
        <taxon>Insecta</taxon>
        <taxon>Pterygota</taxon>
        <taxon>Neoptera</taxon>
        <taxon>Endopterygota</taxon>
        <taxon>Diptera</taxon>
        <taxon>Nematocera</taxon>
        <taxon>Psychodoidea</taxon>
        <taxon>Psychodidae</taxon>
        <taxon>Lutzomyia</taxon>
        <taxon>Lutzomyia</taxon>
    </lineage>
</organism>
<dbReference type="EMBL" id="AY438271">
    <property type="protein sequence ID" value="AAR99725.1"/>
    <property type="molecule type" value="mRNA"/>
</dbReference>
<dbReference type="PDB" id="5KX4">
    <property type="method" value="X-ray"/>
    <property type="resolution" value="1.94 A"/>
    <property type="chains" value="A/B=23-115"/>
</dbReference>
<dbReference type="PDB" id="9EKD">
    <property type="method" value="X-ray"/>
    <property type="resolution" value="3.28 A"/>
    <property type="chains" value="A/B=23-115"/>
</dbReference>
<dbReference type="PDB" id="9EKE">
    <property type="method" value="X-ray"/>
    <property type="resolution" value="3.10 A"/>
    <property type="chains" value="A/B=23-115"/>
</dbReference>
<dbReference type="PDBsum" id="5KX4"/>
<dbReference type="PDBsum" id="9EKD"/>
<dbReference type="PDBsum" id="9EKE"/>
<dbReference type="SMR" id="Q5WPZ4"/>
<dbReference type="VEuPathDB" id="VectorBase:LLOJ006680"/>
<dbReference type="VEuPathDB" id="VectorBase:LLONM1_001341"/>
<dbReference type="Proteomes" id="UP000092461">
    <property type="component" value="Unplaced"/>
</dbReference>
<dbReference type="GO" id="GO:0005576">
    <property type="term" value="C:extracellular region"/>
    <property type="evidence" value="ECO:0007669"/>
    <property type="project" value="UniProtKB-SubCell"/>
</dbReference>
<dbReference type="GO" id="GO:0005549">
    <property type="term" value="F:odorant binding"/>
    <property type="evidence" value="ECO:0007669"/>
    <property type="project" value="InterPro"/>
</dbReference>
<dbReference type="GO" id="GO:0090729">
    <property type="term" value="F:toxin activity"/>
    <property type="evidence" value="ECO:0007669"/>
    <property type="project" value="UniProtKB-KW"/>
</dbReference>
<dbReference type="Gene3D" id="1.10.238.20">
    <property type="entry name" value="Pheromone/general odorant binding protein domain"/>
    <property type="match status" value="1"/>
</dbReference>
<dbReference type="InterPro" id="IPR036728">
    <property type="entry name" value="PBP_GOBP_sf"/>
</dbReference>
<dbReference type="SUPFAM" id="SSF47565">
    <property type="entry name" value="Insect pheromone/odorant-binding proteins"/>
    <property type="match status" value="1"/>
</dbReference>